<sequence>HHSLCAFWVRIFPTQLPLFTPCCTPFLEIPENLSSHPEEGCGSEVKIARAATSLSFYSTLARPRVLSPLTEVQNFLYKGMLGSKCAQYLFQKVLMNVFPCNKPQQRHSSHIQQHLGRLF</sequence>
<feature type="chain" id="PRO_0000125508" description="Putative uncharacterized protein PXBL-III">
    <location>
        <begin position="1" status="less than"/>
        <end position="119"/>
    </location>
</feature>
<feature type="non-terminal residue">
    <location>
        <position position="1"/>
    </location>
</feature>
<accession>P03414</accession>
<organismHost>
    <name type="scientific">Bos taurus</name>
    <name type="common">Bovine</name>
    <dbReference type="NCBI Taxonomy" id="9913"/>
</organismHost>
<organism>
    <name type="scientific">Bovine leukemia virus (isolate Japanese BLV-1)</name>
    <name type="common">BLV</name>
    <dbReference type="NCBI Taxonomy" id="11907"/>
    <lineage>
        <taxon>Viruses</taxon>
        <taxon>Riboviria</taxon>
        <taxon>Pararnavirae</taxon>
        <taxon>Artverviricota</taxon>
        <taxon>Revtraviricetes</taxon>
        <taxon>Ortervirales</taxon>
        <taxon>Retroviridae</taxon>
        <taxon>Orthoretrovirinae</taxon>
        <taxon>Deltaretrovirus</taxon>
        <taxon>Bovine leukemia virus</taxon>
    </lineage>
</organism>
<dbReference type="EMBL" id="K02120">
    <property type="status" value="NOT_ANNOTATED_CDS"/>
    <property type="molecule type" value="Genomic_RNA"/>
</dbReference>
<dbReference type="PIR" id="A04016">
    <property type="entry name" value="QQLJX3"/>
</dbReference>
<name>YPX3_BLVJ</name>
<protein>
    <recommendedName>
        <fullName>Putative uncharacterized protein PXBL-III</fullName>
    </recommendedName>
</protein>
<proteinExistence type="predicted"/>
<reference key="1">
    <citation type="journal article" date="1985" name="Proc. Natl. Acad. Sci. U.S.A.">
        <title>Complete nucleotide sequence of the genome of bovine leukemia virus: its evolutionary relationship to other retroviruses.</title>
        <authorList>
            <person name="Sagata N."/>
            <person name="Yasunaga T."/>
            <person name="Tsuzuku-Kawamura J."/>
            <person name="Ohishi K."/>
            <person name="Ogawa Y."/>
            <person name="Ikawa Y."/>
        </authorList>
    </citation>
    <scope>NUCLEOTIDE SEQUENCE [GENOMIC RNA]</scope>
</reference>